<comment type="function">
    <text evidence="1 3">Dermonecrotic toxins cleave the phosphodiester linkage between the phosphate and headgroup of certain phospholipids (sphingolipid and lysolipid substrates), forming an alcohol (often choline) and a cyclic phosphate (By similarity). This toxin acts on sphingomyelin (SM) (By similarity). It may also act on ceramide phosphoethanolamine (CPE), lysophosphatidylcholine (LPC) and lysophosphatidylethanolamine (LPE), but not on lysophosphatidylserine (LPS), and lysophosphatidylglycerol (LPG) (By similarity). It acts by transphosphatidylation, releasing exclusively cyclic phosphate products as second products (By similarity). Induces dermonecrosis, hemolysis, increased vascular permeability, edema, inflammatory response, and platelet aggregation (By similarity).</text>
</comment>
<comment type="catalytic activity">
    <reaction evidence="1">
        <text>an N-(acyl)-sphingosylphosphocholine = an N-(acyl)-sphingosyl-1,3-cyclic phosphate + choline</text>
        <dbReference type="Rhea" id="RHEA:60652"/>
        <dbReference type="ChEBI" id="CHEBI:15354"/>
        <dbReference type="ChEBI" id="CHEBI:64583"/>
        <dbReference type="ChEBI" id="CHEBI:143892"/>
    </reaction>
</comment>
<comment type="catalytic activity">
    <reaction evidence="1">
        <text>an N-(acyl)-sphingosylphosphoethanolamine = an N-(acyl)-sphingosyl-1,3-cyclic phosphate + ethanolamine</text>
        <dbReference type="Rhea" id="RHEA:60648"/>
        <dbReference type="ChEBI" id="CHEBI:57603"/>
        <dbReference type="ChEBI" id="CHEBI:143891"/>
        <dbReference type="ChEBI" id="CHEBI:143892"/>
    </reaction>
</comment>
<comment type="catalytic activity">
    <reaction evidence="1">
        <text>a 1-acyl-sn-glycero-3-phosphocholine = a 1-acyl-sn-glycero-2,3-cyclic phosphate + choline</text>
        <dbReference type="Rhea" id="RHEA:60700"/>
        <dbReference type="ChEBI" id="CHEBI:15354"/>
        <dbReference type="ChEBI" id="CHEBI:58168"/>
        <dbReference type="ChEBI" id="CHEBI:143947"/>
    </reaction>
</comment>
<comment type="catalytic activity">
    <reaction evidence="1">
        <text>a 1-acyl-sn-glycero-3-phosphoethanolamine = a 1-acyl-sn-glycero-2,3-cyclic phosphate + ethanolamine</text>
        <dbReference type="Rhea" id="RHEA:60704"/>
        <dbReference type="ChEBI" id="CHEBI:57603"/>
        <dbReference type="ChEBI" id="CHEBI:64381"/>
        <dbReference type="ChEBI" id="CHEBI:143947"/>
    </reaction>
</comment>
<comment type="cofactor">
    <cofactor evidence="5">
        <name>Mg(2+)</name>
        <dbReference type="ChEBI" id="CHEBI:18420"/>
    </cofactor>
    <text evidence="5">Binds 1 Mg(2+) ion per subunit.</text>
</comment>
<comment type="subcellular location">
    <subcellularLocation>
        <location evidence="6">Secreted</location>
    </subcellularLocation>
</comment>
<comment type="tissue specificity">
    <text evidence="8">Expressed by the venom gland.</text>
</comment>
<comment type="similarity">
    <text evidence="7">Belongs to the arthropod phospholipase D family.</text>
</comment>
<comment type="caution">
    <text evidence="1 2 4">The most common activity assay for dermonecrotic toxins detects enzymatic activity by monitoring choline release from substrate. Liberation of choline from sphingomyelin (SM) or lysophosphatidylcholine (LPC) is commonly assumed to result from substrate hydrolysis, giving either ceramide-1-phosphate (C1P) or lysophosphatidic acid (LPA), respectively, as a second product. However, two studies from Lajoie and colleagues (2013 and 2015) report the observation of exclusive formation of cyclic phosphate products as second products, resulting from intramolecular transphosphatidylation. Cyclic phosphates have vastly different biological properties from their monoester counterparts, and they may be relevant to the pathology of brown spider envenomation.</text>
</comment>
<dbReference type="EC" id="4.6.1.-" evidence="4"/>
<dbReference type="ArachnoServer" id="AS000155">
    <property type="toxin name" value="Sphingomyelinase D (LOXN6) (N-terminal fragment)"/>
</dbReference>
<dbReference type="GO" id="GO:0005576">
    <property type="term" value="C:extracellular region"/>
    <property type="evidence" value="ECO:0007669"/>
    <property type="project" value="UniProtKB-SubCell"/>
</dbReference>
<dbReference type="GO" id="GO:0016829">
    <property type="term" value="F:lyase activity"/>
    <property type="evidence" value="ECO:0007669"/>
    <property type="project" value="UniProtKB-KW"/>
</dbReference>
<dbReference type="GO" id="GO:0046872">
    <property type="term" value="F:metal ion binding"/>
    <property type="evidence" value="ECO:0007669"/>
    <property type="project" value="UniProtKB-KW"/>
</dbReference>
<dbReference type="GO" id="GO:0090729">
    <property type="term" value="F:toxin activity"/>
    <property type="evidence" value="ECO:0007669"/>
    <property type="project" value="UniProtKB-KW"/>
</dbReference>
<dbReference type="GO" id="GO:0031640">
    <property type="term" value="P:killing of cells of another organism"/>
    <property type="evidence" value="ECO:0007669"/>
    <property type="project" value="UniProtKB-KW"/>
</dbReference>
<dbReference type="GO" id="GO:0016042">
    <property type="term" value="P:lipid catabolic process"/>
    <property type="evidence" value="ECO:0007669"/>
    <property type="project" value="UniProtKB-KW"/>
</dbReference>
<feature type="chain" id="PRO_0000279565" description="Dermonecrotic toxin LgSicTox-LOXN6">
    <location>
        <begin position="1"/>
        <end position="7" status="greater than"/>
    </location>
</feature>
<feature type="non-terminal residue">
    <location>
        <position position="7"/>
    </location>
</feature>
<reference key="1">
    <citation type="journal article" date="2005" name="Proteomics">
        <title>Proteome analysis of brown spider venom: identification of loxnecrogin isoforms in Loxosceles gaucho venom.</title>
        <authorList>
            <person name="Machado L.F."/>
            <person name="Laugesen S."/>
            <person name="Botelho E.D."/>
            <person name="Ricart C.A.O."/>
            <person name="Fontes W."/>
            <person name="Barbaro K.C."/>
            <person name="Roepstorff P."/>
            <person name="Sousa M.V."/>
        </authorList>
    </citation>
    <scope>PROTEIN SEQUENCE</scope>
    <scope>SUBCELLULAR LOCATION</scope>
    <source>
        <tissue>Venom</tissue>
    </source>
</reference>
<protein>
    <recommendedName>
        <fullName>Dermonecrotic toxin LgSicTox-LOXN6</fullName>
        <ecNumber evidence="4">4.6.1.-</ecNumber>
    </recommendedName>
    <alternativeName>
        <fullName>Phospholipase D</fullName>
        <shortName>PLD</shortName>
    </alternativeName>
    <alternativeName>
        <fullName>Sphingomyelin phosphodiesterase D</fullName>
        <shortName>SMD</shortName>
        <shortName>SMase D</shortName>
        <shortName>Sphingomyelinase D</shortName>
    </alternativeName>
</protein>
<evidence type="ECO:0000250" key="1">
    <source>
        <dbReference type="UniProtKB" id="A0A0D4WTV1"/>
    </source>
</evidence>
<evidence type="ECO:0000250" key="2">
    <source>
        <dbReference type="UniProtKB" id="A0A0D4WV12"/>
    </source>
</evidence>
<evidence type="ECO:0000250" key="3">
    <source>
        <dbReference type="UniProtKB" id="P0CE80"/>
    </source>
</evidence>
<evidence type="ECO:0000250" key="4">
    <source>
        <dbReference type="UniProtKB" id="Q4ZFU2"/>
    </source>
</evidence>
<evidence type="ECO:0000250" key="5">
    <source>
        <dbReference type="UniProtKB" id="Q8I914"/>
    </source>
</evidence>
<evidence type="ECO:0000269" key="6">
    <source>
    </source>
</evidence>
<evidence type="ECO:0000305" key="7"/>
<evidence type="ECO:0000305" key="8">
    <source>
    </source>
</evidence>
<organism>
    <name type="scientific">Loxosceles gaucho</name>
    <name type="common">Spider</name>
    <dbReference type="NCBI Taxonomy" id="58216"/>
    <lineage>
        <taxon>Eukaryota</taxon>
        <taxon>Metazoa</taxon>
        <taxon>Ecdysozoa</taxon>
        <taxon>Arthropoda</taxon>
        <taxon>Chelicerata</taxon>
        <taxon>Arachnida</taxon>
        <taxon>Araneae</taxon>
        <taxon>Araneomorphae</taxon>
        <taxon>Haplogynae</taxon>
        <taxon>Scytodoidea</taxon>
        <taxon>Sicariidae</taxon>
        <taxon>Loxosceles</taxon>
    </lineage>
</organism>
<accession>P0C2K8</accession>
<sequence>DDKRRQI</sequence>
<keyword id="KW-0204">Cytolysis</keyword>
<keyword id="KW-1061">Dermonecrotic toxin</keyword>
<keyword id="KW-0903">Direct protein sequencing</keyword>
<keyword id="KW-0354">Hemolysis</keyword>
<keyword id="KW-0442">Lipid degradation</keyword>
<keyword id="KW-0443">Lipid metabolism</keyword>
<keyword id="KW-0456">Lyase</keyword>
<keyword id="KW-0460">Magnesium</keyword>
<keyword id="KW-0479">Metal-binding</keyword>
<keyword id="KW-0964">Secreted</keyword>
<keyword id="KW-0800">Toxin</keyword>
<name>X6_LOXGA</name>
<proteinExistence type="evidence at protein level"/>